<evidence type="ECO:0000255" key="1">
    <source>
        <dbReference type="HAMAP-Rule" id="MF_00420"/>
    </source>
</evidence>
<sequence>MASALRQEGLTQEDYIEIQRRLGRDPNRAELGMFGVMWSEHCCYRNSRPLLRGFPTDGPRILVGPGENAGVVDLGEGHRLAFKIESHNHPSAVEPFQGAATGVGGILRDIFTMGARPIALLNALRFGPLDEPATQGLVEGVVAGISHYGNCVGVPTVGGEVAFDPAYRGNPLVNAMALGLMETDDIVKSGASGVGNPVVYVGSTTGRDGMGGASFASAELSADSLDDRPAVQVGDPFLEKGLIEACLEAFQSGDVVAAQDMGAAGLTCSCSEMAAKGNVGVELDLDRVPAREQGMTAYEFLLSESQERMLFVVQAGREEALMQRFRRWGLQAAVVGQVLEEPVVRVLQHGSVAAEVPARALAEDTPINQHTLISEPPEDIQEHWRWSETDLPSVSRDHDWGADLLALLDDPTIASKRWVYRQYDQQVLANTVVPAGGADAAVVRLRPQQGDASLRGANRGVAATVDCPNRWVALDPERGAMAAVAEAARNLSCVGAVPVAVTDNLNFPSPETPKGYWQLAMACRGLSEGCRVLGTPVTGGNVSLYNETRADDGSLQPIHPTPVVGMVGLVEDLGRVGGLAWRQAGDAVVLLGVSSDERQDDRVGLAGSSYQGVIHGLLTGRPPRVDLDLEQRVQALVRQAWEQGLLASAHDSSDGGLAVALAECSIASGLGVDGALPGDGVAPERRLFAEGGARIVVSVRAECMDAWTSLLADEAHAAVPVTILGAVADHGRFRLSLGSQPVLDQAVQTLTERFDQALPRRLGTA</sequence>
<dbReference type="EC" id="6.3.5.3" evidence="1"/>
<dbReference type="EMBL" id="CT971583">
    <property type="protein sequence ID" value="CAK22429.1"/>
    <property type="molecule type" value="Genomic_DNA"/>
</dbReference>
<dbReference type="SMR" id="A5GHL4"/>
<dbReference type="STRING" id="32051.SynWH7803_0003"/>
<dbReference type="KEGG" id="syx:SynWH7803_0003"/>
<dbReference type="eggNOG" id="COG0046">
    <property type="taxonomic scope" value="Bacteria"/>
</dbReference>
<dbReference type="HOGENOM" id="CLU_003100_0_1_3"/>
<dbReference type="UniPathway" id="UPA00074">
    <property type="reaction ID" value="UER00128"/>
</dbReference>
<dbReference type="Proteomes" id="UP000001566">
    <property type="component" value="Chromosome"/>
</dbReference>
<dbReference type="GO" id="GO:0005737">
    <property type="term" value="C:cytoplasm"/>
    <property type="evidence" value="ECO:0007669"/>
    <property type="project" value="UniProtKB-SubCell"/>
</dbReference>
<dbReference type="GO" id="GO:0005524">
    <property type="term" value="F:ATP binding"/>
    <property type="evidence" value="ECO:0007669"/>
    <property type="project" value="UniProtKB-UniRule"/>
</dbReference>
<dbReference type="GO" id="GO:0000287">
    <property type="term" value="F:magnesium ion binding"/>
    <property type="evidence" value="ECO:0007669"/>
    <property type="project" value="UniProtKB-UniRule"/>
</dbReference>
<dbReference type="GO" id="GO:0004642">
    <property type="term" value="F:phosphoribosylformylglycinamidine synthase activity"/>
    <property type="evidence" value="ECO:0007669"/>
    <property type="project" value="UniProtKB-UniRule"/>
</dbReference>
<dbReference type="GO" id="GO:0006189">
    <property type="term" value="P:'de novo' IMP biosynthetic process"/>
    <property type="evidence" value="ECO:0007669"/>
    <property type="project" value="UniProtKB-UniRule"/>
</dbReference>
<dbReference type="CDD" id="cd02203">
    <property type="entry name" value="PurL_repeat1"/>
    <property type="match status" value="1"/>
</dbReference>
<dbReference type="CDD" id="cd02204">
    <property type="entry name" value="PurL_repeat2"/>
    <property type="match status" value="1"/>
</dbReference>
<dbReference type="FunFam" id="3.30.1330.10:FF:000004">
    <property type="entry name" value="Phosphoribosylformylglycinamidine synthase subunit PurL"/>
    <property type="match status" value="1"/>
</dbReference>
<dbReference type="Gene3D" id="3.90.650.10">
    <property type="entry name" value="PurM-like C-terminal domain"/>
    <property type="match status" value="2"/>
</dbReference>
<dbReference type="Gene3D" id="3.30.1330.10">
    <property type="entry name" value="PurM-like, N-terminal domain"/>
    <property type="match status" value="2"/>
</dbReference>
<dbReference type="HAMAP" id="MF_00420">
    <property type="entry name" value="PurL_2"/>
    <property type="match status" value="1"/>
</dbReference>
<dbReference type="InterPro" id="IPR010074">
    <property type="entry name" value="PRibForGlyAmidine_synth_PurL"/>
</dbReference>
<dbReference type="InterPro" id="IPR041609">
    <property type="entry name" value="PurL_linker"/>
</dbReference>
<dbReference type="InterPro" id="IPR010918">
    <property type="entry name" value="PurM-like_C_dom"/>
</dbReference>
<dbReference type="InterPro" id="IPR036676">
    <property type="entry name" value="PurM-like_C_sf"/>
</dbReference>
<dbReference type="InterPro" id="IPR016188">
    <property type="entry name" value="PurM-like_N"/>
</dbReference>
<dbReference type="InterPro" id="IPR036921">
    <property type="entry name" value="PurM-like_N_sf"/>
</dbReference>
<dbReference type="NCBIfam" id="TIGR01736">
    <property type="entry name" value="FGAM_synth_II"/>
    <property type="match status" value="1"/>
</dbReference>
<dbReference type="NCBIfam" id="NF002290">
    <property type="entry name" value="PRK01213.1"/>
    <property type="match status" value="1"/>
</dbReference>
<dbReference type="PANTHER" id="PTHR43555">
    <property type="entry name" value="PHOSPHORIBOSYLFORMYLGLYCINAMIDINE SYNTHASE SUBUNIT PURL"/>
    <property type="match status" value="1"/>
</dbReference>
<dbReference type="PANTHER" id="PTHR43555:SF1">
    <property type="entry name" value="PHOSPHORIBOSYLFORMYLGLYCINAMIDINE SYNTHASE SUBUNIT PURL"/>
    <property type="match status" value="1"/>
</dbReference>
<dbReference type="Pfam" id="PF00586">
    <property type="entry name" value="AIRS"/>
    <property type="match status" value="2"/>
</dbReference>
<dbReference type="Pfam" id="PF02769">
    <property type="entry name" value="AIRS_C"/>
    <property type="match status" value="2"/>
</dbReference>
<dbReference type="Pfam" id="PF18072">
    <property type="entry name" value="FGAR-AT_linker"/>
    <property type="match status" value="1"/>
</dbReference>
<dbReference type="PIRSF" id="PIRSF001587">
    <property type="entry name" value="FGAM_synthase_II"/>
    <property type="match status" value="1"/>
</dbReference>
<dbReference type="SUPFAM" id="SSF56042">
    <property type="entry name" value="PurM C-terminal domain-like"/>
    <property type="match status" value="2"/>
</dbReference>
<dbReference type="SUPFAM" id="SSF55326">
    <property type="entry name" value="PurM N-terminal domain-like"/>
    <property type="match status" value="2"/>
</dbReference>
<reference key="1">
    <citation type="submission" date="2006-05" db="EMBL/GenBank/DDBJ databases">
        <authorList>
            <consortium name="Genoscope"/>
        </authorList>
    </citation>
    <scope>NUCLEOTIDE SEQUENCE [LARGE SCALE GENOMIC DNA]</scope>
    <source>
        <strain>WH7803</strain>
    </source>
</reference>
<gene>
    <name evidence="1" type="primary">purL</name>
    <name type="ordered locus">SynWH7803_0003</name>
</gene>
<proteinExistence type="inferred from homology"/>
<keyword id="KW-0067">ATP-binding</keyword>
<keyword id="KW-0963">Cytoplasm</keyword>
<keyword id="KW-0436">Ligase</keyword>
<keyword id="KW-0460">Magnesium</keyword>
<keyword id="KW-0479">Metal-binding</keyword>
<keyword id="KW-0547">Nucleotide-binding</keyword>
<keyword id="KW-0658">Purine biosynthesis</keyword>
<keyword id="KW-1185">Reference proteome</keyword>
<organism>
    <name type="scientific">Synechococcus sp. (strain WH7803)</name>
    <dbReference type="NCBI Taxonomy" id="32051"/>
    <lineage>
        <taxon>Bacteria</taxon>
        <taxon>Bacillati</taxon>
        <taxon>Cyanobacteriota</taxon>
        <taxon>Cyanophyceae</taxon>
        <taxon>Synechococcales</taxon>
        <taxon>Synechococcaceae</taxon>
        <taxon>Synechococcus</taxon>
    </lineage>
</organism>
<name>PURL_SYNPW</name>
<feature type="chain" id="PRO_1000080558" description="Phosphoribosylformylglycinamidine synthase subunit PurL">
    <location>
        <begin position="1"/>
        <end position="765"/>
    </location>
</feature>
<feature type="active site" evidence="1">
    <location>
        <position position="41"/>
    </location>
</feature>
<feature type="active site" description="Proton acceptor" evidence="1">
    <location>
        <position position="87"/>
    </location>
</feature>
<feature type="binding site" evidence="1">
    <location>
        <position position="44"/>
    </location>
    <ligand>
        <name>ATP</name>
        <dbReference type="ChEBI" id="CHEBI:30616"/>
    </ligand>
</feature>
<feature type="binding site" evidence="1">
    <location>
        <position position="83"/>
    </location>
    <ligand>
        <name>ATP</name>
        <dbReference type="ChEBI" id="CHEBI:30616"/>
    </ligand>
</feature>
<feature type="binding site" evidence="1">
    <location>
        <position position="85"/>
    </location>
    <ligand>
        <name>Mg(2+)</name>
        <dbReference type="ChEBI" id="CHEBI:18420"/>
        <label>1</label>
    </ligand>
</feature>
<feature type="binding site" evidence="1">
    <location>
        <begin position="86"/>
        <end position="89"/>
    </location>
    <ligand>
        <name>substrate</name>
    </ligand>
</feature>
<feature type="binding site" evidence="1">
    <location>
        <position position="108"/>
    </location>
    <ligand>
        <name>substrate</name>
    </ligand>
</feature>
<feature type="binding site" evidence="1">
    <location>
        <position position="109"/>
    </location>
    <ligand>
        <name>Mg(2+)</name>
        <dbReference type="ChEBI" id="CHEBI:18420"/>
        <label>2</label>
    </ligand>
</feature>
<feature type="binding site" evidence="1">
    <location>
        <position position="232"/>
    </location>
    <ligand>
        <name>substrate</name>
    </ligand>
</feature>
<feature type="binding site" evidence="1">
    <location>
        <position position="260"/>
    </location>
    <ligand>
        <name>Mg(2+)</name>
        <dbReference type="ChEBI" id="CHEBI:18420"/>
        <label>2</label>
    </ligand>
</feature>
<feature type="binding site" evidence="1">
    <location>
        <begin position="304"/>
        <end position="306"/>
    </location>
    <ligand>
        <name>substrate</name>
    </ligand>
</feature>
<feature type="binding site" evidence="1">
    <location>
        <position position="503"/>
    </location>
    <ligand>
        <name>ATP</name>
        <dbReference type="ChEBI" id="CHEBI:30616"/>
    </ligand>
</feature>
<feature type="binding site" evidence="1">
    <location>
        <position position="540"/>
    </location>
    <ligand>
        <name>ATP</name>
        <dbReference type="ChEBI" id="CHEBI:30616"/>
    </ligand>
</feature>
<feature type="binding site" evidence="1">
    <location>
        <position position="541"/>
    </location>
    <ligand>
        <name>Mg(2+)</name>
        <dbReference type="ChEBI" id="CHEBI:18420"/>
        <label>1</label>
    </ligand>
</feature>
<feature type="binding site" evidence="1">
    <location>
        <position position="543"/>
    </location>
    <ligand>
        <name>substrate</name>
    </ligand>
</feature>
<comment type="function">
    <text evidence="1">Part of the phosphoribosylformylglycinamidine synthase complex involved in the purines biosynthetic pathway. Catalyzes the ATP-dependent conversion of formylglycinamide ribonucleotide (FGAR) and glutamine to yield formylglycinamidine ribonucleotide (FGAM) and glutamate. The FGAM synthase complex is composed of three subunits. PurQ produces an ammonia molecule by converting glutamine to glutamate. PurL transfers the ammonia molecule to FGAR to form FGAM in an ATP-dependent manner. PurS interacts with PurQ and PurL and is thought to assist in the transfer of the ammonia molecule from PurQ to PurL.</text>
</comment>
<comment type="catalytic activity">
    <reaction evidence="1">
        <text>N(2)-formyl-N(1)-(5-phospho-beta-D-ribosyl)glycinamide + L-glutamine + ATP + H2O = 2-formamido-N(1)-(5-O-phospho-beta-D-ribosyl)acetamidine + L-glutamate + ADP + phosphate + H(+)</text>
        <dbReference type="Rhea" id="RHEA:17129"/>
        <dbReference type="ChEBI" id="CHEBI:15377"/>
        <dbReference type="ChEBI" id="CHEBI:15378"/>
        <dbReference type="ChEBI" id="CHEBI:29985"/>
        <dbReference type="ChEBI" id="CHEBI:30616"/>
        <dbReference type="ChEBI" id="CHEBI:43474"/>
        <dbReference type="ChEBI" id="CHEBI:58359"/>
        <dbReference type="ChEBI" id="CHEBI:147286"/>
        <dbReference type="ChEBI" id="CHEBI:147287"/>
        <dbReference type="ChEBI" id="CHEBI:456216"/>
        <dbReference type="EC" id="6.3.5.3"/>
    </reaction>
</comment>
<comment type="pathway">
    <text evidence="1">Purine metabolism; IMP biosynthesis via de novo pathway; 5-amino-1-(5-phospho-D-ribosyl)imidazole from N(2)-formyl-N(1)-(5-phospho-D-ribosyl)glycinamide: step 1/2.</text>
</comment>
<comment type="subunit">
    <text evidence="1">Monomer. Part of the FGAM synthase complex composed of 1 PurL, 1 PurQ and 2 PurS subunits.</text>
</comment>
<comment type="subcellular location">
    <subcellularLocation>
        <location evidence="1">Cytoplasm</location>
    </subcellularLocation>
</comment>
<comment type="similarity">
    <text evidence="1">Belongs to the FGAMS family.</text>
</comment>
<accession>A5GHL4</accession>
<protein>
    <recommendedName>
        <fullName evidence="1">Phosphoribosylformylglycinamidine synthase subunit PurL</fullName>
        <shortName evidence="1">FGAM synthase</shortName>
        <ecNumber evidence="1">6.3.5.3</ecNumber>
    </recommendedName>
    <alternativeName>
        <fullName evidence="1">Formylglycinamide ribonucleotide amidotransferase subunit II</fullName>
        <shortName evidence="1">FGAR amidotransferase II</shortName>
        <shortName evidence="1">FGAR-AT II</shortName>
    </alternativeName>
    <alternativeName>
        <fullName evidence="1">Glutamine amidotransferase PurL</fullName>
    </alternativeName>
    <alternativeName>
        <fullName evidence="1">Phosphoribosylformylglycinamidine synthase subunit II</fullName>
    </alternativeName>
</protein>